<gene>
    <name evidence="1" type="primary">coaBC</name>
    <name type="synonym">dfp</name>
    <name type="ordered locus">MT1436</name>
</gene>
<feature type="chain" id="PRO_0000427043" description="Coenzyme A biosynthesis bifunctional protein CoaBC">
    <location>
        <begin position="1"/>
        <end position="418"/>
    </location>
</feature>
<feature type="region of interest" description="Phosphopantothenoylcysteine decarboxylase" evidence="1">
    <location>
        <begin position="1"/>
        <end position="195"/>
    </location>
</feature>
<feature type="region of interest" description="Phosphopantothenate--cysteine ligase" evidence="1">
    <location>
        <begin position="196"/>
        <end position="418"/>
    </location>
</feature>
<feature type="binding site" evidence="1">
    <location>
        <position position="285"/>
    </location>
    <ligand>
        <name>CTP</name>
        <dbReference type="ChEBI" id="CHEBI:37563"/>
    </ligand>
</feature>
<feature type="binding site" evidence="1">
    <location>
        <position position="295"/>
    </location>
    <ligand>
        <name>CTP</name>
        <dbReference type="ChEBI" id="CHEBI:37563"/>
    </ligand>
</feature>
<feature type="binding site" evidence="1">
    <location>
        <position position="336"/>
    </location>
    <ligand>
        <name>CTP</name>
        <dbReference type="ChEBI" id="CHEBI:37563"/>
    </ligand>
</feature>
<feature type="binding site" evidence="1">
    <location>
        <position position="354"/>
    </location>
    <ligand>
        <name>CTP</name>
        <dbReference type="ChEBI" id="CHEBI:37563"/>
    </ligand>
</feature>
<feature type="binding site" evidence="1">
    <location>
        <position position="358"/>
    </location>
    <ligand>
        <name>CTP</name>
        <dbReference type="ChEBI" id="CHEBI:37563"/>
    </ligand>
</feature>
<keyword id="KW-0210">Decarboxylase</keyword>
<keyword id="KW-0285">Flavoprotein</keyword>
<keyword id="KW-0288">FMN</keyword>
<keyword id="KW-0436">Ligase</keyword>
<keyword id="KW-0456">Lyase</keyword>
<keyword id="KW-0460">Magnesium</keyword>
<keyword id="KW-0479">Metal-binding</keyword>
<keyword id="KW-0511">Multifunctional enzyme</keyword>
<keyword id="KW-1185">Reference proteome</keyword>
<proteinExistence type="inferred from homology"/>
<organism>
    <name type="scientific">Mycobacterium tuberculosis (strain CDC 1551 / Oshkosh)</name>
    <dbReference type="NCBI Taxonomy" id="83331"/>
    <lineage>
        <taxon>Bacteria</taxon>
        <taxon>Bacillati</taxon>
        <taxon>Actinomycetota</taxon>
        <taxon>Actinomycetes</taxon>
        <taxon>Mycobacteriales</taxon>
        <taxon>Mycobacteriaceae</taxon>
        <taxon>Mycobacterium</taxon>
        <taxon>Mycobacterium tuberculosis complex</taxon>
    </lineage>
</organism>
<dbReference type="EC" id="4.1.1.36" evidence="1"/>
<dbReference type="EC" id="6.3.2.5" evidence="1"/>
<dbReference type="EMBL" id="AE000516">
    <property type="protein sequence ID" value="AAK45701.1"/>
    <property type="molecule type" value="Genomic_DNA"/>
</dbReference>
<dbReference type="PIR" id="E70899">
    <property type="entry name" value="E70899"/>
</dbReference>
<dbReference type="RefSeq" id="WP_003898859.1">
    <property type="nucleotide sequence ID" value="NZ_KK341227.1"/>
</dbReference>
<dbReference type="SMR" id="P9WNZ0"/>
<dbReference type="KEGG" id="mtc:MT1436"/>
<dbReference type="PATRIC" id="fig|83331.31.peg.1542"/>
<dbReference type="HOGENOM" id="CLU_033319_0_3_11"/>
<dbReference type="UniPathway" id="UPA00241">
    <property type="reaction ID" value="UER00353"/>
</dbReference>
<dbReference type="UniPathway" id="UPA00241">
    <property type="reaction ID" value="UER00354"/>
</dbReference>
<dbReference type="Proteomes" id="UP000001020">
    <property type="component" value="Chromosome"/>
</dbReference>
<dbReference type="GO" id="GO:0071513">
    <property type="term" value="C:phosphopantothenoylcysteine decarboxylase complex"/>
    <property type="evidence" value="ECO:0007669"/>
    <property type="project" value="TreeGrafter"/>
</dbReference>
<dbReference type="GO" id="GO:0010181">
    <property type="term" value="F:FMN binding"/>
    <property type="evidence" value="ECO:0007669"/>
    <property type="project" value="UniProtKB-UniRule"/>
</dbReference>
<dbReference type="GO" id="GO:0046872">
    <property type="term" value="F:metal ion binding"/>
    <property type="evidence" value="ECO:0007669"/>
    <property type="project" value="UniProtKB-KW"/>
</dbReference>
<dbReference type="GO" id="GO:0004632">
    <property type="term" value="F:phosphopantothenate--cysteine ligase activity"/>
    <property type="evidence" value="ECO:0007669"/>
    <property type="project" value="UniProtKB-UniRule"/>
</dbReference>
<dbReference type="GO" id="GO:0004633">
    <property type="term" value="F:phosphopantothenoylcysteine decarboxylase activity"/>
    <property type="evidence" value="ECO:0007669"/>
    <property type="project" value="UniProtKB-UniRule"/>
</dbReference>
<dbReference type="GO" id="GO:0015937">
    <property type="term" value="P:coenzyme A biosynthetic process"/>
    <property type="evidence" value="ECO:0007669"/>
    <property type="project" value="UniProtKB-UniRule"/>
</dbReference>
<dbReference type="GO" id="GO:0015941">
    <property type="term" value="P:pantothenate catabolic process"/>
    <property type="evidence" value="ECO:0007669"/>
    <property type="project" value="InterPro"/>
</dbReference>
<dbReference type="FunFam" id="3.40.50.10300:FF:000001">
    <property type="entry name" value="Coenzyme A biosynthesis bifunctional protein CoaBC"/>
    <property type="match status" value="1"/>
</dbReference>
<dbReference type="FunFam" id="3.40.50.1950:FF:000009">
    <property type="entry name" value="Coenzyme A biosynthesis bifunctional protein CoaBC"/>
    <property type="match status" value="1"/>
</dbReference>
<dbReference type="Gene3D" id="3.40.50.10300">
    <property type="entry name" value="CoaB-like"/>
    <property type="match status" value="1"/>
</dbReference>
<dbReference type="Gene3D" id="3.40.50.1950">
    <property type="entry name" value="Flavin prenyltransferase-like"/>
    <property type="match status" value="1"/>
</dbReference>
<dbReference type="HAMAP" id="MF_02225">
    <property type="entry name" value="CoaBC"/>
    <property type="match status" value="1"/>
</dbReference>
<dbReference type="InterPro" id="IPR035929">
    <property type="entry name" value="CoaB-like_sf"/>
</dbReference>
<dbReference type="InterPro" id="IPR005252">
    <property type="entry name" value="CoaBC"/>
</dbReference>
<dbReference type="InterPro" id="IPR007085">
    <property type="entry name" value="DNA/pantothenate-metab_flavo_C"/>
</dbReference>
<dbReference type="InterPro" id="IPR036551">
    <property type="entry name" value="Flavin_trans-like"/>
</dbReference>
<dbReference type="InterPro" id="IPR003382">
    <property type="entry name" value="Flavoprotein"/>
</dbReference>
<dbReference type="NCBIfam" id="TIGR00521">
    <property type="entry name" value="coaBC_dfp"/>
    <property type="match status" value="1"/>
</dbReference>
<dbReference type="PANTHER" id="PTHR14359">
    <property type="entry name" value="HOMO-OLIGOMERIC FLAVIN CONTAINING CYS DECARBOXYLASE FAMILY"/>
    <property type="match status" value="1"/>
</dbReference>
<dbReference type="PANTHER" id="PTHR14359:SF6">
    <property type="entry name" value="PHOSPHOPANTOTHENOYLCYSTEINE DECARBOXYLASE"/>
    <property type="match status" value="1"/>
</dbReference>
<dbReference type="Pfam" id="PF04127">
    <property type="entry name" value="DFP"/>
    <property type="match status" value="1"/>
</dbReference>
<dbReference type="Pfam" id="PF02441">
    <property type="entry name" value="Flavoprotein"/>
    <property type="match status" value="1"/>
</dbReference>
<dbReference type="SUPFAM" id="SSF102645">
    <property type="entry name" value="CoaB-like"/>
    <property type="match status" value="1"/>
</dbReference>
<dbReference type="SUPFAM" id="SSF52507">
    <property type="entry name" value="Homo-oligomeric flavin-containing Cys decarboxylases, HFCD"/>
    <property type="match status" value="1"/>
</dbReference>
<accession>P9WNZ0</accession>
<accession>L0T847</accession>
<accession>P67733</accession>
<accession>P71661</accession>
<sequence length="418" mass="43577">MVDHKRIPKQVIVGVSGGIAAYKACTVVRQLTEASHRVRVIPTESALRFVGAATFEALSGEPVCTDVFADVPAVPHVHLGQQADLVVVAPATADLLARAAAGRADDLLTATLLTARCPVLFAPAMHTEMWLHPATVDNVATLRRRGAVVLEPATGRLTGADSGAGRLPEAEEITTLAQLLLERHDALPYDLAGRKLLVTAGGTREPIDPVRFIGNRSSGKQGYAVARVAAQRGADVTLIAGHTAGLVDPAGVEVVHVSSAQQLADAVSKHAPTADVLVMAAAVADFRPAQVATAKIKKGVEGPPTIELLRNDDVLAGVVRARAHGQLPNMRAIVGFAAETGDANGDVLFHARAKLRRKGCDLLVVNAVGEGRAFEVDSNDGWLLASDGTESALQHGSKTLMASRIVDAIVTFLAGCSS</sequence>
<name>COABC_MYCTO</name>
<protein>
    <recommendedName>
        <fullName evidence="1">Coenzyme A biosynthesis bifunctional protein CoaBC</fullName>
    </recommendedName>
    <alternativeName>
        <fullName evidence="1">DNA/pantothenate metabolism flavoprotein</fullName>
    </alternativeName>
    <alternativeName>
        <fullName evidence="1">Phosphopantothenoylcysteine synthetase/decarboxylase</fullName>
        <shortName evidence="1">PPCS-PPCDC</shortName>
    </alternativeName>
    <domain>
        <recommendedName>
            <fullName evidence="1">Phosphopantothenoylcysteine decarboxylase</fullName>
            <shortName evidence="1">PPC decarboxylase</shortName>
            <shortName evidence="1">PPC-DC</shortName>
            <ecNumber evidence="1">4.1.1.36</ecNumber>
        </recommendedName>
        <alternativeName>
            <fullName evidence="1">CoaC</fullName>
        </alternativeName>
    </domain>
    <domain>
        <recommendedName>
            <fullName evidence="1">Phosphopantothenate--cysteine ligase</fullName>
            <ecNumber evidence="1">6.3.2.5</ecNumber>
        </recommendedName>
        <alternativeName>
            <fullName evidence="1">CoaB</fullName>
        </alternativeName>
        <alternativeName>
            <fullName evidence="1">Phosphopantothenoylcysteine synthetase</fullName>
            <shortName evidence="1">PPC synthetase</shortName>
            <shortName evidence="1">PPC-S</shortName>
        </alternativeName>
    </domain>
</protein>
<reference key="1">
    <citation type="journal article" date="2002" name="J. Bacteriol.">
        <title>Whole-genome comparison of Mycobacterium tuberculosis clinical and laboratory strains.</title>
        <authorList>
            <person name="Fleischmann R.D."/>
            <person name="Alland D."/>
            <person name="Eisen J.A."/>
            <person name="Carpenter L."/>
            <person name="White O."/>
            <person name="Peterson J.D."/>
            <person name="DeBoy R.T."/>
            <person name="Dodson R.J."/>
            <person name="Gwinn M.L."/>
            <person name="Haft D.H."/>
            <person name="Hickey E.K."/>
            <person name="Kolonay J.F."/>
            <person name="Nelson W.C."/>
            <person name="Umayam L.A."/>
            <person name="Ermolaeva M.D."/>
            <person name="Salzberg S.L."/>
            <person name="Delcher A."/>
            <person name="Utterback T.R."/>
            <person name="Weidman J.F."/>
            <person name="Khouri H.M."/>
            <person name="Gill J."/>
            <person name="Mikula A."/>
            <person name="Bishai W."/>
            <person name="Jacobs W.R. Jr."/>
            <person name="Venter J.C."/>
            <person name="Fraser C.M."/>
        </authorList>
    </citation>
    <scope>NUCLEOTIDE SEQUENCE [LARGE SCALE GENOMIC DNA]</scope>
    <source>
        <strain>CDC 1551 / Oshkosh</strain>
    </source>
</reference>
<comment type="function">
    <text evidence="1">Catalyzes two sequential steps in the biosynthesis of coenzyme A. In the first step cysteine is conjugated to 4'-phosphopantothenate to form 4-phosphopantothenoylcysteine. In the second step the latter compound is decarboxylated to form 4'-phosphopantotheine.</text>
</comment>
<comment type="catalytic activity">
    <reaction evidence="1">
        <text>N-[(R)-4-phosphopantothenoyl]-L-cysteine + H(+) = (R)-4'-phosphopantetheine + CO2</text>
        <dbReference type="Rhea" id="RHEA:16793"/>
        <dbReference type="ChEBI" id="CHEBI:15378"/>
        <dbReference type="ChEBI" id="CHEBI:16526"/>
        <dbReference type="ChEBI" id="CHEBI:59458"/>
        <dbReference type="ChEBI" id="CHEBI:61723"/>
        <dbReference type="EC" id="4.1.1.36"/>
    </reaction>
</comment>
<comment type="catalytic activity">
    <reaction evidence="1">
        <text>(R)-4'-phosphopantothenate + L-cysteine + CTP = N-[(R)-4-phosphopantothenoyl]-L-cysteine + CMP + diphosphate + H(+)</text>
        <dbReference type="Rhea" id="RHEA:19397"/>
        <dbReference type="ChEBI" id="CHEBI:10986"/>
        <dbReference type="ChEBI" id="CHEBI:15378"/>
        <dbReference type="ChEBI" id="CHEBI:33019"/>
        <dbReference type="ChEBI" id="CHEBI:35235"/>
        <dbReference type="ChEBI" id="CHEBI:37563"/>
        <dbReference type="ChEBI" id="CHEBI:59458"/>
        <dbReference type="ChEBI" id="CHEBI:60377"/>
        <dbReference type="EC" id="6.3.2.5"/>
    </reaction>
</comment>
<comment type="cofactor">
    <cofactor evidence="1">
        <name>Mg(2+)</name>
        <dbReference type="ChEBI" id="CHEBI:18420"/>
    </cofactor>
</comment>
<comment type="cofactor">
    <cofactor evidence="1">
        <name>FMN</name>
        <dbReference type="ChEBI" id="CHEBI:58210"/>
    </cofactor>
    <text evidence="1">Binds 1 FMN per subunit.</text>
</comment>
<comment type="pathway">
    <text evidence="1">Cofactor biosynthesis; coenzyme A biosynthesis; CoA from (R)-pantothenate: step 2/5.</text>
</comment>
<comment type="pathway">
    <text evidence="1">Cofactor biosynthesis; coenzyme A biosynthesis; CoA from (R)-pantothenate: step 3/5.</text>
</comment>
<comment type="similarity">
    <text evidence="1">In the N-terminal section; belongs to the HFCD (homo-oligomeric flavin containing Cys decarboxylase) superfamily.</text>
</comment>
<comment type="similarity">
    <text evidence="1">In the C-terminal section; belongs to the PPC synthetase family.</text>
</comment>
<evidence type="ECO:0000255" key="1">
    <source>
        <dbReference type="HAMAP-Rule" id="MF_02225"/>
    </source>
</evidence>